<comment type="function">
    <text evidence="1">mRNA decapping enzyme that specifically removes the nicotinamide adenine dinucleotide (NAD) cap from a subset of mRNAs by hydrolyzing the diphosphate linkage to produce nicotinamide mononucleotide (NMN) and 5' monophosphate mRNA. The NAD-cap is present at the 5'-end of some mRNAs and stabilizes RNA against 5'-processing. Has preference for mRNAs with a 5'-end purine. Catalyzes the hydrolysis of a broad range of dinucleotide pyrophosphates.</text>
</comment>
<comment type="catalytic activity">
    <reaction evidence="1">
        <text>a 5'-end NAD(+)-phospho-ribonucleoside in mRNA + H2O = a 5'-end phospho-adenosine-phospho-ribonucleoside in mRNA + beta-nicotinamide D-ribonucleotide + 2 H(+)</text>
        <dbReference type="Rhea" id="RHEA:60876"/>
        <dbReference type="Rhea" id="RHEA-COMP:15698"/>
        <dbReference type="Rhea" id="RHEA-COMP:15719"/>
        <dbReference type="ChEBI" id="CHEBI:14649"/>
        <dbReference type="ChEBI" id="CHEBI:15377"/>
        <dbReference type="ChEBI" id="CHEBI:15378"/>
        <dbReference type="ChEBI" id="CHEBI:144029"/>
        <dbReference type="ChEBI" id="CHEBI:144051"/>
    </reaction>
    <physiologicalReaction direction="left-to-right" evidence="1">
        <dbReference type="Rhea" id="RHEA:60877"/>
    </physiologicalReaction>
</comment>
<comment type="catalytic activity">
    <reaction evidence="1">
        <text>NAD(+) + H2O = beta-nicotinamide D-ribonucleotide + AMP + 2 H(+)</text>
        <dbReference type="Rhea" id="RHEA:11800"/>
        <dbReference type="ChEBI" id="CHEBI:14649"/>
        <dbReference type="ChEBI" id="CHEBI:15377"/>
        <dbReference type="ChEBI" id="CHEBI:15378"/>
        <dbReference type="ChEBI" id="CHEBI:57540"/>
        <dbReference type="ChEBI" id="CHEBI:456215"/>
        <dbReference type="EC" id="3.6.1.22"/>
    </reaction>
</comment>
<comment type="catalytic activity">
    <reaction evidence="1">
        <text>NADH + H2O = reduced beta-nicotinamide D-ribonucleotide + AMP + 2 H(+)</text>
        <dbReference type="Rhea" id="RHEA:48868"/>
        <dbReference type="ChEBI" id="CHEBI:15377"/>
        <dbReference type="ChEBI" id="CHEBI:15378"/>
        <dbReference type="ChEBI" id="CHEBI:57945"/>
        <dbReference type="ChEBI" id="CHEBI:90832"/>
        <dbReference type="ChEBI" id="CHEBI:456215"/>
        <dbReference type="EC" id="3.6.1.22"/>
    </reaction>
</comment>
<comment type="cofactor">
    <cofactor evidence="1">
        <name>Mg(2+)</name>
        <dbReference type="ChEBI" id="CHEBI:18420"/>
    </cofactor>
    <cofactor evidence="1">
        <name>Mn(2+)</name>
        <dbReference type="ChEBI" id="CHEBI:29035"/>
    </cofactor>
    <text evidence="1">Divalent metal cations. Mg(2+) or Mn(2+).</text>
</comment>
<comment type="cofactor">
    <cofactor evidence="1">
        <name>Zn(2+)</name>
        <dbReference type="ChEBI" id="CHEBI:29105"/>
    </cofactor>
    <text evidence="1">Binds 1 zinc ion per subunit.</text>
</comment>
<comment type="subunit">
    <text evidence="1">Homodimer.</text>
</comment>
<comment type="similarity">
    <text evidence="1">Belongs to the Nudix hydrolase family. NudC subfamily.</text>
</comment>
<comment type="sequence caution" evidence="2">
    <conflict type="erroneous initiation">
        <sequence resource="EMBL-CDS" id="AAM84082"/>
    </conflict>
</comment>
<comment type="sequence caution" evidence="2">
    <conflict type="erroneous initiation">
        <sequence resource="EMBL-CDS" id="AAS63269"/>
    </conflict>
</comment>
<gene>
    <name evidence="1" type="primary">nudC</name>
    <name type="ordered locus">YPO3736</name>
    <name type="ordered locus">y0493</name>
    <name type="ordered locus">YP_3099</name>
</gene>
<name>NUDC_YERPE</name>
<feature type="chain" id="PRO_0000056981" description="NAD-capped RNA hydrolase NudC">
    <location>
        <begin position="1"/>
        <end position="260"/>
    </location>
</feature>
<feature type="domain" description="Nudix hydrolase" evidence="1">
    <location>
        <begin position="125"/>
        <end position="248"/>
    </location>
</feature>
<feature type="short sequence motif" description="Nudix box" evidence="1">
    <location>
        <begin position="159"/>
        <end position="180"/>
    </location>
</feature>
<feature type="binding site" evidence="1">
    <location>
        <position position="25"/>
    </location>
    <ligand>
        <name>substrate</name>
    </ligand>
</feature>
<feature type="binding site" evidence="1">
    <location>
        <position position="69"/>
    </location>
    <ligand>
        <name>substrate</name>
    </ligand>
</feature>
<feature type="binding site" evidence="1">
    <location>
        <position position="98"/>
    </location>
    <ligand>
        <name>Zn(2+)</name>
        <dbReference type="ChEBI" id="CHEBI:29105"/>
    </ligand>
</feature>
<feature type="binding site" evidence="1">
    <location>
        <position position="101"/>
    </location>
    <ligand>
        <name>Zn(2+)</name>
        <dbReference type="ChEBI" id="CHEBI:29105"/>
    </ligand>
</feature>
<feature type="binding site" evidence="1">
    <location>
        <position position="111"/>
    </location>
    <ligand>
        <name>substrate</name>
    </ligand>
</feature>
<feature type="binding site" evidence="1">
    <location>
        <position position="116"/>
    </location>
    <ligand>
        <name>Zn(2+)</name>
        <dbReference type="ChEBI" id="CHEBI:29105"/>
    </ligand>
</feature>
<feature type="binding site" evidence="1">
    <location>
        <position position="119"/>
    </location>
    <ligand>
        <name>Zn(2+)</name>
        <dbReference type="ChEBI" id="CHEBI:29105"/>
    </ligand>
</feature>
<feature type="binding site" evidence="1">
    <location>
        <position position="124"/>
    </location>
    <ligand>
        <name>substrate</name>
    </ligand>
</feature>
<feature type="binding site" evidence="1">
    <location>
        <position position="158"/>
    </location>
    <ligand>
        <name>a divalent metal cation</name>
        <dbReference type="ChEBI" id="CHEBI:60240"/>
        <label>1</label>
    </ligand>
</feature>
<feature type="binding site" evidence="1">
    <location>
        <position position="174"/>
    </location>
    <ligand>
        <name>a divalent metal cation</name>
        <dbReference type="ChEBI" id="CHEBI:60240"/>
        <label>2</label>
    </ligand>
</feature>
<feature type="binding site" evidence="1">
    <location>
        <position position="174"/>
    </location>
    <ligand>
        <name>a divalent metal cation</name>
        <dbReference type="ChEBI" id="CHEBI:60240"/>
        <label>3</label>
    </ligand>
</feature>
<feature type="binding site" evidence="1">
    <location>
        <position position="178"/>
    </location>
    <ligand>
        <name>a divalent metal cation</name>
        <dbReference type="ChEBI" id="CHEBI:60240"/>
        <label>1</label>
    </ligand>
</feature>
<feature type="binding site" evidence="1">
    <location>
        <position position="178"/>
    </location>
    <ligand>
        <name>a divalent metal cation</name>
        <dbReference type="ChEBI" id="CHEBI:60240"/>
        <label>3</label>
    </ligand>
</feature>
<feature type="binding site" evidence="1">
    <location>
        <begin position="192"/>
        <end position="199"/>
    </location>
    <ligand>
        <name>substrate</name>
    </ligand>
</feature>
<feature type="binding site" evidence="1">
    <location>
        <position position="219"/>
    </location>
    <ligand>
        <name>a divalent metal cation</name>
        <dbReference type="ChEBI" id="CHEBI:60240"/>
        <label>1</label>
    </ligand>
</feature>
<feature type="binding site" evidence="1">
    <location>
        <position position="219"/>
    </location>
    <ligand>
        <name>a divalent metal cation</name>
        <dbReference type="ChEBI" id="CHEBI:60240"/>
        <label>3</label>
    </ligand>
</feature>
<feature type="binding site" evidence="1">
    <location>
        <position position="241"/>
    </location>
    <ligand>
        <name>substrate</name>
    </ligand>
</feature>
<accession>Q8ZAQ5</accession>
<accession>Q0WAS2</accession>
<dbReference type="EC" id="3.6.1.-" evidence="1"/>
<dbReference type="EC" id="3.6.1.22" evidence="1"/>
<dbReference type="EMBL" id="AL590842">
    <property type="protein sequence ID" value="CAL22323.1"/>
    <property type="molecule type" value="Genomic_DNA"/>
</dbReference>
<dbReference type="EMBL" id="AE009952">
    <property type="protein sequence ID" value="AAM84082.1"/>
    <property type="status" value="ALT_INIT"/>
    <property type="molecule type" value="Genomic_DNA"/>
</dbReference>
<dbReference type="EMBL" id="AE017042">
    <property type="protein sequence ID" value="AAS63269.1"/>
    <property type="status" value="ALT_INIT"/>
    <property type="molecule type" value="Genomic_DNA"/>
</dbReference>
<dbReference type="PIR" id="AH0454">
    <property type="entry name" value="AH0454"/>
</dbReference>
<dbReference type="RefSeq" id="WP_002210684.1">
    <property type="nucleotide sequence ID" value="NZ_WUCM01000097.1"/>
</dbReference>
<dbReference type="RefSeq" id="YP_002348616.1">
    <property type="nucleotide sequence ID" value="NC_003143.1"/>
</dbReference>
<dbReference type="SMR" id="Q8ZAQ5"/>
<dbReference type="STRING" id="214092.YPO3736"/>
<dbReference type="PaxDb" id="214092-YPO3736"/>
<dbReference type="DNASU" id="1145440"/>
<dbReference type="EnsemblBacteria" id="AAS63269">
    <property type="protein sequence ID" value="AAS63269"/>
    <property type="gene ID" value="YP_3099"/>
</dbReference>
<dbReference type="GeneID" id="57974981"/>
<dbReference type="KEGG" id="ype:YPO3736"/>
<dbReference type="KEGG" id="ypk:y0493"/>
<dbReference type="KEGG" id="ypm:YP_3099"/>
<dbReference type="PATRIC" id="fig|214092.21.peg.4254"/>
<dbReference type="eggNOG" id="COG2816">
    <property type="taxonomic scope" value="Bacteria"/>
</dbReference>
<dbReference type="HOGENOM" id="CLU_037162_0_1_6"/>
<dbReference type="OMA" id="TWAREHR"/>
<dbReference type="OrthoDB" id="9791656at2"/>
<dbReference type="Proteomes" id="UP000000815">
    <property type="component" value="Chromosome"/>
</dbReference>
<dbReference type="Proteomes" id="UP000001019">
    <property type="component" value="Chromosome"/>
</dbReference>
<dbReference type="Proteomes" id="UP000002490">
    <property type="component" value="Chromosome"/>
</dbReference>
<dbReference type="GO" id="GO:0000287">
    <property type="term" value="F:magnesium ion binding"/>
    <property type="evidence" value="ECO:0007669"/>
    <property type="project" value="UniProtKB-UniRule"/>
</dbReference>
<dbReference type="GO" id="GO:0030145">
    <property type="term" value="F:manganese ion binding"/>
    <property type="evidence" value="ECO:0007669"/>
    <property type="project" value="UniProtKB-UniRule"/>
</dbReference>
<dbReference type="GO" id="GO:0000210">
    <property type="term" value="F:NAD+ diphosphatase activity"/>
    <property type="evidence" value="ECO:0007669"/>
    <property type="project" value="UniProtKB-UniRule"/>
</dbReference>
<dbReference type="GO" id="GO:0035529">
    <property type="term" value="F:NADH pyrophosphatase activity"/>
    <property type="evidence" value="ECO:0000318"/>
    <property type="project" value="GO_Central"/>
</dbReference>
<dbReference type="GO" id="GO:0110153">
    <property type="term" value="F:RNA NAD-cap (NMN-forming) hydrolase activity"/>
    <property type="evidence" value="ECO:0007669"/>
    <property type="project" value="RHEA"/>
</dbReference>
<dbReference type="GO" id="GO:0008270">
    <property type="term" value="F:zinc ion binding"/>
    <property type="evidence" value="ECO:0007669"/>
    <property type="project" value="UniProtKB-UniRule"/>
</dbReference>
<dbReference type="GO" id="GO:0019677">
    <property type="term" value="P:NAD catabolic process"/>
    <property type="evidence" value="ECO:0000318"/>
    <property type="project" value="GO_Central"/>
</dbReference>
<dbReference type="GO" id="GO:0006734">
    <property type="term" value="P:NADH metabolic process"/>
    <property type="evidence" value="ECO:0000318"/>
    <property type="project" value="GO_Central"/>
</dbReference>
<dbReference type="GO" id="GO:0006742">
    <property type="term" value="P:NADP catabolic process"/>
    <property type="evidence" value="ECO:0000318"/>
    <property type="project" value="GO_Central"/>
</dbReference>
<dbReference type="CDD" id="cd03429">
    <property type="entry name" value="NUDIX_NADH_pyrophosphatase_Nudt13"/>
    <property type="match status" value="1"/>
</dbReference>
<dbReference type="FunFam" id="3.90.79.10:FF:000004">
    <property type="entry name" value="NADH pyrophosphatase"/>
    <property type="match status" value="1"/>
</dbReference>
<dbReference type="FunFam" id="3.90.79.20:FF:000001">
    <property type="entry name" value="NADH pyrophosphatase"/>
    <property type="match status" value="1"/>
</dbReference>
<dbReference type="Gene3D" id="3.90.79.20">
    <property type="match status" value="1"/>
</dbReference>
<dbReference type="Gene3D" id="3.90.79.10">
    <property type="entry name" value="Nucleoside Triphosphate Pyrophosphohydrolase"/>
    <property type="match status" value="1"/>
</dbReference>
<dbReference type="HAMAP" id="MF_00297">
    <property type="entry name" value="Nudix_NudC"/>
    <property type="match status" value="1"/>
</dbReference>
<dbReference type="InterPro" id="IPR050241">
    <property type="entry name" value="NAD-cap_RNA_hydrolase_NudC"/>
</dbReference>
<dbReference type="InterPro" id="IPR049734">
    <property type="entry name" value="NudC-like_C"/>
</dbReference>
<dbReference type="InterPro" id="IPR015797">
    <property type="entry name" value="NUDIX_hydrolase-like_dom_sf"/>
</dbReference>
<dbReference type="InterPro" id="IPR020084">
    <property type="entry name" value="NUDIX_hydrolase_CS"/>
</dbReference>
<dbReference type="InterPro" id="IPR000086">
    <property type="entry name" value="NUDIX_hydrolase_dom"/>
</dbReference>
<dbReference type="InterPro" id="IPR022925">
    <property type="entry name" value="RNA_Hydrolase_NudC"/>
</dbReference>
<dbReference type="InterPro" id="IPR015376">
    <property type="entry name" value="Znr_NADH_PPase"/>
</dbReference>
<dbReference type="NCBIfam" id="NF001299">
    <property type="entry name" value="PRK00241.1"/>
    <property type="match status" value="1"/>
</dbReference>
<dbReference type="PANTHER" id="PTHR42904:SF6">
    <property type="entry name" value="NAD-CAPPED RNA HYDROLASE NUDT12"/>
    <property type="match status" value="1"/>
</dbReference>
<dbReference type="PANTHER" id="PTHR42904">
    <property type="entry name" value="NUDIX HYDROLASE, NUDC SUBFAMILY"/>
    <property type="match status" value="1"/>
</dbReference>
<dbReference type="Pfam" id="PF00293">
    <property type="entry name" value="NUDIX"/>
    <property type="match status" value="1"/>
</dbReference>
<dbReference type="Pfam" id="PF09297">
    <property type="entry name" value="Zn_ribbon_NUD"/>
    <property type="match status" value="1"/>
</dbReference>
<dbReference type="SUPFAM" id="SSF55811">
    <property type="entry name" value="Nudix"/>
    <property type="match status" value="2"/>
</dbReference>
<dbReference type="PROSITE" id="PS51462">
    <property type="entry name" value="NUDIX"/>
    <property type="match status" value="1"/>
</dbReference>
<dbReference type="PROSITE" id="PS00893">
    <property type="entry name" value="NUDIX_BOX"/>
    <property type="match status" value="1"/>
</dbReference>
<sequence length="260" mass="29678">MELQLTGKESGWWIVSHENKLWLPKGELPQGNAANWSLQGTTARQIGEWQGQSVWLIRQMMPSGMGSVRQLLDVDRGLFQLAGRGVQLAEFYRSHRFCGYCGHEMHASRTEWASLCNHCRERYYPQIAPCVIVAIRRGDEILLAQHVRHRGGINTVLAGFVEVGETLEQAVSREVLEESNIHIKNLRYVTSQPWPFPHSLMMAFMADYDSGELCHDPKELLNAGWYRYDQLPLLPPPGTVARRLIEDTVVLCREHSDLSQ</sequence>
<evidence type="ECO:0000255" key="1">
    <source>
        <dbReference type="HAMAP-Rule" id="MF_00297"/>
    </source>
</evidence>
<evidence type="ECO:0000305" key="2"/>
<keyword id="KW-0378">Hydrolase</keyword>
<keyword id="KW-0460">Magnesium</keyword>
<keyword id="KW-0464">Manganese</keyword>
<keyword id="KW-0479">Metal-binding</keyword>
<keyword id="KW-0520">NAD</keyword>
<keyword id="KW-1185">Reference proteome</keyword>
<keyword id="KW-0862">Zinc</keyword>
<protein>
    <recommendedName>
        <fullName evidence="1">NAD-capped RNA hydrolase NudC</fullName>
        <shortName evidence="1">DeNADding enzyme NudC</shortName>
        <ecNumber evidence="1">3.6.1.-</ecNumber>
    </recommendedName>
    <alternativeName>
        <fullName evidence="1">NADH pyrophosphatase</fullName>
        <ecNumber evidence="1">3.6.1.22</ecNumber>
    </alternativeName>
</protein>
<reference key="1">
    <citation type="journal article" date="2001" name="Nature">
        <title>Genome sequence of Yersinia pestis, the causative agent of plague.</title>
        <authorList>
            <person name="Parkhill J."/>
            <person name="Wren B.W."/>
            <person name="Thomson N.R."/>
            <person name="Titball R.W."/>
            <person name="Holden M.T.G."/>
            <person name="Prentice M.B."/>
            <person name="Sebaihia M."/>
            <person name="James K.D."/>
            <person name="Churcher C.M."/>
            <person name="Mungall K.L."/>
            <person name="Baker S."/>
            <person name="Basham D."/>
            <person name="Bentley S.D."/>
            <person name="Brooks K."/>
            <person name="Cerdeno-Tarraga A.-M."/>
            <person name="Chillingworth T."/>
            <person name="Cronin A."/>
            <person name="Davies R.M."/>
            <person name="Davis P."/>
            <person name="Dougan G."/>
            <person name="Feltwell T."/>
            <person name="Hamlin N."/>
            <person name="Holroyd S."/>
            <person name="Jagels K."/>
            <person name="Karlyshev A.V."/>
            <person name="Leather S."/>
            <person name="Moule S."/>
            <person name="Oyston P.C.F."/>
            <person name="Quail M.A."/>
            <person name="Rutherford K.M."/>
            <person name="Simmonds M."/>
            <person name="Skelton J."/>
            <person name="Stevens K."/>
            <person name="Whitehead S."/>
            <person name="Barrell B.G."/>
        </authorList>
    </citation>
    <scope>NUCLEOTIDE SEQUENCE [LARGE SCALE GENOMIC DNA]</scope>
    <source>
        <strain>CO-92 / Biovar Orientalis</strain>
    </source>
</reference>
<reference key="2">
    <citation type="journal article" date="2002" name="J. Bacteriol.">
        <title>Genome sequence of Yersinia pestis KIM.</title>
        <authorList>
            <person name="Deng W."/>
            <person name="Burland V."/>
            <person name="Plunkett G. III"/>
            <person name="Boutin A."/>
            <person name="Mayhew G.F."/>
            <person name="Liss P."/>
            <person name="Perna N.T."/>
            <person name="Rose D.J."/>
            <person name="Mau B."/>
            <person name="Zhou S."/>
            <person name="Schwartz D.C."/>
            <person name="Fetherston J.D."/>
            <person name="Lindler L.E."/>
            <person name="Brubaker R.R."/>
            <person name="Plano G.V."/>
            <person name="Straley S.C."/>
            <person name="McDonough K.A."/>
            <person name="Nilles M.L."/>
            <person name="Matson J.S."/>
            <person name="Blattner F.R."/>
            <person name="Perry R.D."/>
        </authorList>
    </citation>
    <scope>NUCLEOTIDE SEQUENCE [LARGE SCALE GENOMIC DNA]</scope>
    <source>
        <strain>KIM10+ / Biovar Mediaevalis</strain>
    </source>
</reference>
<reference key="3">
    <citation type="journal article" date="2004" name="DNA Res.">
        <title>Complete genome sequence of Yersinia pestis strain 91001, an isolate avirulent to humans.</title>
        <authorList>
            <person name="Song Y."/>
            <person name="Tong Z."/>
            <person name="Wang J."/>
            <person name="Wang L."/>
            <person name="Guo Z."/>
            <person name="Han Y."/>
            <person name="Zhang J."/>
            <person name="Pei D."/>
            <person name="Zhou D."/>
            <person name="Qin H."/>
            <person name="Pang X."/>
            <person name="Han Y."/>
            <person name="Zhai J."/>
            <person name="Li M."/>
            <person name="Cui B."/>
            <person name="Qi Z."/>
            <person name="Jin L."/>
            <person name="Dai R."/>
            <person name="Chen F."/>
            <person name="Li S."/>
            <person name="Ye C."/>
            <person name="Du Z."/>
            <person name="Lin W."/>
            <person name="Wang J."/>
            <person name="Yu J."/>
            <person name="Yang H."/>
            <person name="Wang J."/>
            <person name="Huang P."/>
            <person name="Yang R."/>
        </authorList>
    </citation>
    <scope>NUCLEOTIDE SEQUENCE [LARGE SCALE GENOMIC DNA]</scope>
    <source>
        <strain>91001 / Biovar Mediaevalis</strain>
    </source>
</reference>
<organism>
    <name type="scientific">Yersinia pestis</name>
    <dbReference type="NCBI Taxonomy" id="632"/>
    <lineage>
        <taxon>Bacteria</taxon>
        <taxon>Pseudomonadati</taxon>
        <taxon>Pseudomonadota</taxon>
        <taxon>Gammaproteobacteria</taxon>
        <taxon>Enterobacterales</taxon>
        <taxon>Yersiniaceae</taxon>
        <taxon>Yersinia</taxon>
    </lineage>
</organism>
<proteinExistence type="inferred from homology"/>